<evidence type="ECO:0000255" key="1">
    <source>
        <dbReference type="HAMAP-Rule" id="MF_00213"/>
    </source>
</evidence>
<protein>
    <recommendedName>
        <fullName evidence="1">Hydrogenase maturation factor HypA</fullName>
    </recommendedName>
</protein>
<reference key="1">
    <citation type="journal article" date="2006" name="J. Bacteriol.">
        <title>The Methanosarcina barkeri genome: comparative analysis with Methanosarcina acetivorans and Methanosarcina mazei reveals extensive rearrangement within methanosarcinal genomes.</title>
        <authorList>
            <person name="Maeder D.L."/>
            <person name="Anderson I."/>
            <person name="Brettin T.S."/>
            <person name="Bruce D.C."/>
            <person name="Gilna P."/>
            <person name="Han C.S."/>
            <person name="Lapidus A."/>
            <person name="Metcalf W.W."/>
            <person name="Saunders E."/>
            <person name="Tapia R."/>
            <person name="Sowers K.R."/>
        </authorList>
    </citation>
    <scope>NUCLEOTIDE SEQUENCE [LARGE SCALE GENOMIC DNA]</scope>
    <source>
        <strain>Fusaro / DSM 804</strain>
    </source>
</reference>
<feature type="chain" id="PRO_1000023837" description="Hydrogenase maturation factor HypA">
    <location>
        <begin position="1"/>
        <end position="133"/>
    </location>
</feature>
<feature type="binding site" evidence="1">
    <location>
        <position position="2"/>
    </location>
    <ligand>
        <name>Ni(2+)</name>
        <dbReference type="ChEBI" id="CHEBI:49786"/>
    </ligand>
</feature>
<feature type="binding site" evidence="1">
    <location>
        <position position="73"/>
    </location>
    <ligand>
        <name>Zn(2+)</name>
        <dbReference type="ChEBI" id="CHEBI:29105"/>
    </ligand>
</feature>
<feature type="binding site" evidence="1">
    <location>
        <position position="75"/>
    </location>
    <ligand>
        <name>Zn(2+)</name>
        <dbReference type="ChEBI" id="CHEBI:29105"/>
    </ligand>
</feature>
<feature type="binding site" evidence="1">
    <location>
        <position position="105"/>
    </location>
    <ligand>
        <name>Zn(2+)</name>
        <dbReference type="ChEBI" id="CHEBI:29105"/>
    </ligand>
</feature>
<feature type="binding site" evidence="1">
    <location>
        <position position="108"/>
    </location>
    <ligand>
        <name>Zn(2+)</name>
        <dbReference type="ChEBI" id="CHEBI:29105"/>
    </ligand>
</feature>
<comment type="function">
    <text evidence="1">Involved in the maturation of [NiFe] hydrogenases. Required for nickel insertion into the metal center of the hydrogenase.</text>
</comment>
<comment type="similarity">
    <text evidence="1">Belongs to the HypA/HybF family.</text>
</comment>
<name>HYPA_METBF</name>
<accession>Q46BF1</accession>
<keyword id="KW-0479">Metal-binding</keyword>
<keyword id="KW-0533">Nickel</keyword>
<keyword id="KW-0862">Zinc</keyword>
<dbReference type="EMBL" id="CP000099">
    <property type="protein sequence ID" value="AAZ70791.1"/>
    <property type="molecule type" value="Genomic_DNA"/>
</dbReference>
<dbReference type="SMR" id="Q46BF1"/>
<dbReference type="STRING" id="269797.Mbar_A1850"/>
<dbReference type="PaxDb" id="269797-Mbar_A1850"/>
<dbReference type="KEGG" id="mba:Mbar_A1850"/>
<dbReference type="eggNOG" id="arCOG04426">
    <property type="taxonomic scope" value="Archaea"/>
</dbReference>
<dbReference type="HOGENOM" id="CLU_126929_2_1_2"/>
<dbReference type="OrthoDB" id="36835at2157"/>
<dbReference type="GO" id="GO:0016151">
    <property type="term" value="F:nickel cation binding"/>
    <property type="evidence" value="ECO:0007669"/>
    <property type="project" value="UniProtKB-UniRule"/>
</dbReference>
<dbReference type="GO" id="GO:0008270">
    <property type="term" value="F:zinc ion binding"/>
    <property type="evidence" value="ECO:0007669"/>
    <property type="project" value="UniProtKB-UniRule"/>
</dbReference>
<dbReference type="GO" id="GO:0051604">
    <property type="term" value="P:protein maturation"/>
    <property type="evidence" value="ECO:0007669"/>
    <property type="project" value="InterPro"/>
</dbReference>
<dbReference type="GO" id="GO:0036211">
    <property type="term" value="P:protein modification process"/>
    <property type="evidence" value="ECO:0007669"/>
    <property type="project" value="UniProtKB-UniRule"/>
</dbReference>
<dbReference type="Gene3D" id="3.30.2320.80">
    <property type="match status" value="1"/>
</dbReference>
<dbReference type="HAMAP" id="MF_00213">
    <property type="entry name" value="HypA_HybF"/>
    <property type="match status" value="1"/>
</dbReference>
<dbReference type="InterPro" id="IPR020538">
    <property type="entry name" value="Hydgase_Ni_incorp_HypA/HybF_CS"/>
</dbReference>
<dbReference type="InterPro" id="IPR000688">
    <property type="entry name" value="HypA/HybF"/>
</dbReference>
<dbReference type="NCBIfam" id="TIGR00100">
    <property type="entry name" value="hypA"/>
    <property type="match status" value="1"/>
</dbReference>
<dbReference type="NCBIfam" id="NF001976">
    <property type="entry name" value="PRK00762.1"/>
    <property type="match status" value="1"/>
</dbReference>
<dbReference type="PANTHER" id="PTHR34535">
    <property type="entry name" value="HYDROGENASE MATURATION FACTOR HYPA"/>
    <property type="match status" value="1"/>
</dbReference>
<dbReference type="PANTHER" id="PTHR34535:SF3">
    <property type="entry name" value="HYDROGENASE MATURATION FACTOR HYPA"/>
    <property type="match status" value="1"/>
</dbReference>
<dbReference type="Pfam" id="PF01155">
    <property type="entry name" value="HypA"/>
    <property type="match status" value="1"/>
</dbReference>
<dbReference type="PIRSF" id="PIRSF004761">
    <property type="entry name" value="Hydrgn_mat_HypA"/>
    <property type="match status" value="1"/>
</dbReference>
<dbReference type="PROSITE" id="PS01249">
    <property type="entry name" value="HYPA"/>
    <property type="match status" value="1"/>
</dbReference>
<gene>
    <name evidence="1" type="primary">hypA</name>
    <name type="ordered locus">Mbar_A1850</name>
</gene>
<sequence length="133" mass="14748">MHELSIACEIFEQVMSTAKEHGATEVKHVTLQMGRLSHTNPEQLSFCFNVLADESIAKDADLIVEMIPPSLECECGYKGAVDEKKIRENCEFESELLAYAAVMECPVCGKPAQLTGGRELIIKSIEIETENQD</sequence>
<proteinExistence type="inferred from homology"/>
<organism>
    <name type="scientific">Methanosarcina barkeri (strain Fusaro / DSM 804)</name>
    <dbReference type="NCBI Taxonomy" id="269797"/>
    <lineage>
        <taxon>Archaea</taxon>
        <taxon>Methanobacteriati</taxon>
        <taxon>Methanobacteriota</taxon>
        <taxon>Stenosarchaea group</taxon>
        <taxon>Methanomicrobia</taxon>
        <taxon>Methanosarcinales</taxon>
        <taxon>Methanosarcinaceae</taxon>
        <taxon>Methanosarcina</taxon>
    </lineage>
</organism>